<accession>Q8Z8P6</accession>
<dbReference type="EC" id="6.1.1.16" evidence="1"/>
<dbReference type="EMBL" id="AL513382">
    <property type="protein sequence ID" value="CAD05021.1"/>
    <property type="molecule type" value="Genomic_DNA"/>
</dbReference>
<dbReference type="EMBL" id="AE014613">
    <property type="protein sequence ID" value="AAO69918.1"/>
    <property type="molecule type" value="Genomic_DNA"/>
</dbReference>
<dbReference type="RefSeq" id="NP_455129.1">
    <property type="nucleotide sequence ID" value="NC_003198.1"/>
</dbReference>
<dbReference type="RefSeq" id="WP_000912377.1">
    <property type="nucleotide sequence ID" value="NZ_WSUR01000008.1"/>
</dbReference>
<dbReference type="SMR" id="Q8Z8P6"/>
<dbReference type="STRING" id="220341.gene:17584601"/>
<dbReference type="KEGG" id="stt:t2324"/>
<dbReference type="KEGG" id="sty:STY0585"/>
<dbReference type="PATRIC" id="fig|220341.7.peg.588"/>
<dbReference type="eggNOG" id="COG0215">
    <property type="taxonomic scope" value="Bacteria"/>
</dbReference>
<dbReference type="HOGENOM" id="CLU_013528_0_1_6"/>
<dbReference type="OMA" id="IMRWPSP"/>
<dbReference type="OrthoDB" id="9815130at2"/>
<dbReference type="Proteomes" id="UP000000541">
    <property type="component" value="Chromosome"/>
</dbReference>
<dbReference type="Proteomes" id="UP000002670">
    <property type="component" value="Chromosome"/>
</dbReference>
<dbReference type="GO" id="GO:0005829">
    <property type="term" value="C:cytosol"/>
    <property type="evidence" value="ECO:0007669"/>
    <property type="project" value="TreeGrafter"/>
</dbReference>
<dbReference type="GO" id="GO:0005524">
    <property type="term" value="F:ATP binding"/>
    <property type="evidence" value="ECO:0007669"/>
    <property type="project" value="UniProtKB-UniRule"/>
</dbReference>
<dbReference type="GO" id="GO:0004817">
    <property type="term" value="F:cysteine-tRNA ligase activity"/>
    <property type="evidence" value="ECO:0007669"/>
    <property type="project" value="UniProtKB-UniRule"/>
</dbReference>
<dbReference type="GO" id="GO:0008270">
    <property type="term" value="F:zinc ion binding"/>
    <property type="evidence" value="ECO:0007669"/>
    <property type="project" value="UniProtKB-UniRule"/>
</dbReference>
<dbReference type="GO" id="GO:0006423">
    <property type="term" value="P:cysteinyl-tRNA aminoacylation"/>
    <property type="evidence" value="ECO:0007669"/>
    <property type="project" value="UniProtKB-UniRule"/>
</dbReference>
<dbReference type="CDD" id="cd07963">
    <property type="entry name" value="Anticodon_Ia_Cys"/>
    <property type="match status" value="1"/>
</dbReference>
<dbReference type="CDD" id="cd00672">
    <property type="entry name" value="CysRS_core"/>
    <property type="match status" value="1"/>
</dbReference>
<dbReference type="FunFam" id="1.20.120.1910:FF:000001">
    <property type="entry name" value="Cysteine--tRNA ligase"/>
    <property type="match status" value="1"/>
</dbReference>
<dbReference type="FunFam" id="3.40.50.620:FF:000009">
    <property type="entry name" value="Cysteine--tRNA ligase"/>
    <property type="match status" value="1"/>
</dbReference>
<dbReference type="Gene3D" id="1.20.120.1910">
    <property type="entry name" value="Cysteine-tRNA ligase, C-terminal anti-codon recognition domain"/>
    <property type="match status" value="1"/>
</dbReference>
<dbReference type="Gene3D" id="3.40.50.620">
    <property type="entry name" value="HUPs"/>
    <property type="match status" value="1"/>
</dbReference>
<dbReference type="HAMAP" id="MF_00041">
    <property type="entry name" value="Cys_tRNA_synth"/>
    <property type="match status" value="1"/>
</dbReference>
<dbReference type="InterPro" id="IPR015803">
    <property type="entry name" value="Cys-tRNA-ligase"/>
</dbReference>
<dbReference type="InterPro" id="IPR015273">
    <property type="entry name" value="Cys-tRNA-synt_Ia_DALR"/>
</dbReference>
<dbReference type="InterPro" id="IPR024909">
    <property type="entry name" value="Cys-tRNA/MSH_ligase"/>
</dbReference>
<dbReference type="InterPro" id="IPR056411">
    <property type="entry name" value="CysS_C"/>
</dbReference>
<dbReference type="InterPro" id="IPR014729">
    <property type="entry name" value="Rossmann-like_a/b/a_fold"/>
</dbReference>
<dbReference type="InterPro" id="IPR032678">
    <property type="entry name" value="tRNA-synt_1_cat_dom"/>
</dbReference>
<dbReference type="InterPro" id="IPR009080">
    <property type="entry name" value="tRNAsynth_Ia_anticodon-bd"/>
</dbReference>
<dbReference type="NCBIfam" id="TIGR00435">
    <property type="entry name" value="cysS"/>
    <property type="match status" value="1"/>
</dbReference>
<dbReference type="PANTHER" id="PTHR10890:SF3">
    <property type="entry name" value="CYSTEINE--TRNA LIGASE, CYTOPLASMIC"/>
    <property type="match status" value="1"/>
</dbReference>
<dbReference type="PANTHER" id="PTHR10890">
    <property type="entry name" value="CYSTEINYL-TRNA SYNTHETASE"/>
    <property type="match status" value="1"/>
</dbReference>
<dbReference type="Pfam" id="PF23493">
    <property type="entry name" value="CysS_C"/>
    <property type="match status" value="1"/>
</dbReference>
<dbReference type="Pfam" id="PF09190">
    <property type="entry name" value="DALR_2"/>
    <property type="match status" value="1"/>
</dbReference>
<dbReference type="Pfam" id="PF01406">
    <property type="entry name" value="tRNA-synt_1e"/>
    <property type="match status" value="1"/>
</dbReference>
<dbReference type="PRINTS" id="PR00983">
    <property type="entry name" value="TRNASYNTHCYS"/>
</dbReference>
<dbReference type="SMART" id="SM00840">
    <property type="entry name" value="DALR_2"/>
    <property type="match status" value="1"/>
</dbReference>
<dbReference type="SUPFAM" id="SSF47323">
    <property type="entry name" value="Anticodon-binding domain of a subclass of class I aminoacyl-tRNA synthetases"/>
    <property type="match status" value="1"/>
</dbReference>
<dbReference type="SUPFAM" id="SSF52374">
    <property type="entry name" value="Nucleotidylyl transferase"/>
    <property type="match status" value="1"/>
</dbReference>
<keyword id="KW-0030">Aminoacyl-tRNA synthetase</keyword>
<keyword id="KW-0067">ATP-binding</keyword>
<keyword id="KW-0963">Cytoplasm</keyword>
<keyword id="KW-0436">Ligase</keyword>
<keyword id="KW-0479">Metal-binding</keyword>
<keyword id="KW-0547">Nucleotide-binding</keyword>
<keyword id="KW-0648">Protein biosynthesis</keyword>
<keyword id="KW-0862">Zinc</keyword>
<evidence type="ECO:0000255" key="1">
    <source>
        <dbReference type="HAMAP-Rule" id="MF_00041"/>
    </source>
</evidence>
<gene>
    <name evidence="1" type="primary">cysS</name>
    <name type="ordered locus">STY0585</name>
    <name type="ordered locus">t2324</name>
</gene>
<protein>
    <recommendedName>
        <fullName evidence="1">Cysteine--tRNA ligase</fullName>
        <ecNumber evidence="1">6.1.1.16</ecNumber>
    </recommendedName>
    <alternativeName>
        <fullName evidence="1">Cysteinyl-tRNA synthetase</fullName>
        <shortName evidence="1">CysRS</shortName>
    </alternativeName>
</protein>
<reference key="1">
    <citation type="journal article" date="2001" name="Nature">
        <title>Complete genome sequence of a multiple drug resistant Salmonella enterica serovar Typhi CT18.</title>
        <authorList>
            <person name="Parkhill J."/>
            <person name="Dougan G."/>
            <person name="James K.D."/>
            <person name="Thomson N.R."/>
            <person name="Pickard D."/>
            <person name="Wain J."/>
            <person name="Churcher C.M."/>
            <person name="Mungall K.L."/>
            <person name="Bentley S.D."/>
            <person name="Holden M.T.G."/>
            <person name="Sebaihia M."/>
            <person name="Baker S."/>
            <person name="Basham D."/>
            <person name="Brooks K."/>
            <person name="Chillingworth T."/>
            <person name="Connerton P."/>
            <person name="Cronin A."/>
            <person name="Davis P."/>
            <person name="Davies R.M."/>
            <person name="Dowd L."/>
            <person name="White N."/>
            <person name="Farrar J."/>
            <person name="Feltwell T."/>
            <person name="Hamlin N."/>
            <person name="Haque A."/>
            <person name="Hien T.T."/>
            <person name="Holroyd S."/>
            <person name="Jagels K."/>
            <person name="Krogh A."/>
            <person name="Larsen T.S."/>
            <person name="Leather S."/>
            <person name="Moule S."/>
            <person name="O'Gaora P."/>
            <person name="Parry C."/>
            <person name="Quail M.A."/>
            <person name="Rutherford K.M."/>
            <person name="Simmonds M."/>
            <person name="Skelton J."/>
            <person name="Stevens K."/>
            <person name="Whitehead S."/>
            <person name="Barrell B.G."/>
        </authorList>
    </citation>
    <scope>NUCLEOTIDE SEQUENCE [LARGE SCALE GENOMIC DNA]</scope>
    <source>
        <strain>CT18</strain>
    </source>
</reference>
<reference key="2">
    <citation type="journal article" date="2003" name="J. Bacteriol.">
        <title>Comparative genomics of Salmonella enterica serovar Typhi strains Ty2 and CT18.</title>
        <authorList>
            <person name="Deng W."/>
            <person name="Liou S.-R."/>
            <person name="Plunkett G. III"/>
            <person name="Mayhew G.F."/>
            <person name="Rose D.J."/>
            <person name="Burland V."/>
            <person name="Kodoyianni V."/>
            <person name="Schwartz D.C."/>
            <person name="Blattner F.R."/>
        </authorList>
    </citation>
    <scope>NUCLEOTIDE SEQUENCE [LARGE SCALE GENOMIC DNA]</scope>
    <source>
        <strain>ATCC 700931 / Ty2</strain>
    </source>
</reference>
<proteinExistence type="inferred from homology"/>
<organism>
    <name type="scientific">Salmonella typhi</name>
    <dbReference type="NCBI Taxonomy" id="90370"/>
    <lineage>
        <taxon>Bacteria</taxon>
        <taxon>Pseudomonadati</taxon>
        <taxon>Pseudomonadota</taxon>
        <taxon>Gammaproteobacteria</taxon>
        <taxon>Enterobacterales</taxon>
        <taxon>Enterobacteriaceae</taxon>
        <taxon>Salmonella</taxon>
    </lineage>
</organism>
<name>SYC_SALTI</name>
<feature type="chain" id="PRO_0000159472" description="Cysteine--tRNA ligase">
    <location>
        <begin position="1"/>
        <end position="461"/>
    </location>
</feature>
<feature type="short sequence motif" description="'HIGH' region">
    <location>
        <begin position="30"/>
        <end position="40"/>
    </location>
</feature>
<feature type="short sequence motif" description="'KMSKS' region">
    <location>
        <begin position="266"/>
        <end position="270"/>
    </location>
</feature>
<feature type="binding site" evidence="1">
    <location>
        <position position="28"/>
    </location>
    <ligand>
        <name>Zn(2+)</name>
        <dbReference type="ChEBI" id="CHEBI:29105"/>
    </ligand>
</feature>
<feature type="binding site" evidence="1">
    <location>
        <position position="209"/>
    </location>
    <ligand>
        <name>Zn(2+)</name>
        <dbReference type="ChEBI" id="CHEBI:29105"/>
    </ligand>
</feature>
<feature type="binding site" evidence="1">
    <location>
        <position position="234"/>
    </location>
    <ligand>
        <name>Zn(2+)</name>
        <dbReference type="ChEBI" id="CHEBI:29105"/>
    </ligand>
</feature>
<feature type="binding site" evidence="1">
    <location>
        <position position="238"/>
    </location>
    <ligand>
        <name>Zn(2+)</name>
        <dbReference type="ChEBI" id="CHEBI:29105"/>
    </ligand>
</feature>
<feature type="binding site" evidence="1">
    <location>
        <position position="269"/>
    </location>
    <ligand>
        <name>ATP</name>
        <dbReference type="ChEBI" id="CHEBI:30616"/>
    </ligand>
</feature>
<comment type="catalytic activity">
    <reaction evidence="1">
        <text>tRNA(Cys) + L-cysteine + ATP = L-cysteinyl-tRNA(Cys) + AMP + diphosphate</text>
        <dbReference type="Rhea" id="RHEA:17773"/>
        <dbReference type="Rhea" id="RHEA-COMP:9661"/>
        <dbReference type="Rhea" id="RHEA-COMP:9679"/>
        <dbReference type="ChEBI" id="CHEBI:30616"/>
        <dbReference type="ChEBI" id="CHEBI:33019"/>
        <dbReference type="ChEBI" id="CHEBI:35235"/>
        <dbReference type="ChEBI" id="CHEBI:78442"/>
        <dbReference type="ChEBI" id="CHEBI:78517"/>
        <dbReference type="ChEBI" id="CHEBI:456215"/>
        <dbReference type="EC" id="6.1.1.16"/>
    </reaction>
</comment>
<comment type="cofactor">
    <cofactor evidence="1">
        <name>Zn(2+)</name>
        <dbReference type="ChEBI" id="CHEBI:29105"/>
    </cofactor>
    <text evidence="1">Binds 1 zinc ion per subunit.</text>
</comment>
<comment type="subunit">
    <text evidence="1">Monomer.</text>
</comment>
<comment type="subcellular location">
    <subcellularLocation>
        <location evidence="1">Cytoplasm</location>
    </subcellularLocation>
</comment>
<comment type="similarity">
    <text evidence="1">Belongs to the class-I aminoacyl-tRNA synthetase family.</text>
</comment>
<sequence>MLKIFNTLTRQKEEFKPIHAGEVGMYVCGITVYDLCHIGHGRTFVAFDVVARYLRFLGYKLKYVRNITDIDDKIIKRANENGESFVALVDRMIAEMHQDFDALNILRPDSEPRATHHIQEIIELTRTLIEKGHAYVADNGDVMFDVPTDPTYGQLSRQDLEQLQAGARVDVVDVKRNPMDFVLWKMSKEGEPSWPSPWGEGRPGWHIECSAMNCKQLGNHFDIHGGGSDLMFPHHENEIAQSTCAHDGEYVNYWMHSGMVMVDREKMSKSLGNFFTVRDVLKYYDAETVRYFLMSGHYRSQLNYSEENLKQARASLERLYTALRGTDKSAAPAGGEAFEARFVEAMNDDFNTPEAYSVLFDMAREVNRLKGEDMTAANAMASHLRKISGVLGLLEQEPDVFLQSGAQADDGEVAEIEALIQQRLDARKAKDWAAADAARDRLTEMGIILEDGPQGTTWRRK</sequence>